<name>BH030_ARATH</name>
<feature type="chain" id="PRO_0000358739" description="Transcription factor bHLH30">
    <location>
        <begin position="1"/>
        <end position="368"/>
    </location>
</feature>
<feature type="domain" description="bHLH" evidence="2">
    <location>
        <begin position="173"/>
        <end position="222"/>
    </location>
</feature>
<feature type="region of interest" description="Disordered" evidence="3">
    <location>
        <begin position="333"/>
        <end position="368"/>
    </location>
</feature>
<feature type="coiled-coil region" evidence="1">
    <location>
        <begin position="3"/>
        <end position="30"/>
    </location>
</feature>
<feature type="compositionally biased region" description="Polar residues" evidence="3">
    <location>
        <begin position="337"/>
        <end position="368"/>
    </location>
</feature>
<gene>
    <name type="primary">BHLH30</name>
    <name type="synonym">EN53</name>
    <name type="ordered locus">At1g68810</name>
    <name type="ORF">F14K14.8</name>
    <name type="ORF">T6L1.1</name>
</gene>
<protein>
    <recommendedName>
        <fullName>Transcription factor bHLH30</fullName>
    </recommendedName>
    <alternativeName>
        <fullName>Basic helix-loop-helix protein 30</fullName>
        <shortName>AtbHLH30</shortName>
        <shortName>bHLH 30</shortName>
    </alternativeName>
    <alternativeName>
        <fullName>Transcription factor EN 53</fullName>
    </alternativeName>
    <alternativeName>
        <fullName>bHLH transcription factor bHLH030</fullName>
    </alternativeName>
</protein>
<keyword id="KW-0175">Coiled coil</keyword>
<keyword id="KW-0238">DNA-binding</keyword>
<keyword id="KW-0539">Nucleus</keyword>
<keyword id="KW-1185">Reference proteome</keyword>
<keyword id="KW-0804">Transcription</keyword>
<keyword id="KW-0805">Transcription regulation</keyword>
<reference key="1">
    <citation type="journal article" date="2000" name="Nature">
        <title>Sequence and analysis of chromosome 1 of the plant Arabidopsis thaliana.</title>
        <authorList>
            <person name="Theologis A."/>
            <person name="Ecker J.R."/>
            <person name="Palm C.J."/>
            <person name="Federspiel N.A."/>
            <person name="Kaul S."/>
            <person name="White O."/>
            <person name="Alonso J."/>
            <person name="Altafi H."/>
            <person name="Araujo R."/>
            <person name="Bowman C.L."/>
            <person name="Brooks S.Y."/>
            <person name="Buehler E."/>
            <person name="Chan A."/>
            <person name="Chao Q."/>
            <person name="Chen H."/>
            <person name="Cheuk R.F."/>
            <person name="Chin C.W."/>
            <person name="Chung M.K."/>
            <person name="Conn L."/>
            <person name="Conway A.B."/>
            <person name="Conway A.R."/>
            <person name="Creasy T.H."/>
            <person name="Dewar K."/>
            <person name="Dunn P."/>
            <person name="Etgu P."/>
            <person name="Feldblyum T.V."/>
            <person name="Feng J.-D."/>
            <person name="Fong B."/>
            <person name="Fujii C.Y."/>
            <person name="Gill J.E."/>
            <person name="Goldsmith A.D."/>
            <person name="Haas B."/>
            <person name="Hansen N.F."/>
            <person name="Hughes B."/>
            <person name="Huizar L."/>
            <person name="Hunter J.L."/>
            <person name="Jenkins J."/>
            <person name="Johnson-Hopson C."/>
            <person name="Khan S."/>
            <person name="Khaykin E."/>
            <person name="Kim C.J."/>
            <person name="Koo H.L."/>
            <person name="Kremenetskaia I."/>
            <person name="Kurtz D.B."/>
            <person name="Kwan A."/>
            <person name="Lam B."/>
            <person name="Langin-Hooper S."/>
            <person name="Lee A."/>
            <person name="Lee J.M."/>
            <person name="Lenz C.A."/>
            <person name="Li J.H."/>
            <person name="Li Y.-P."/>
            <person name="Lin X."/>
            <person name="Liu S.X."/>
            <person name="Liu Z.A."/>
            <person name="Luros J.S."/>
            <person name="Maiti R."/>
            <person name="Marziali A."/>
            <person name="Militscher J."/>
            <person name="Miranda M."/>
            <person name="Nguyen M."/>
            <person name="Nierman W.C."/>
            <person name="Osborne B.I."/>
            <person name="Pai G."/>
            <person name="Peterson J."/>
            <person name="Pham P.K."/>
            <person name="Rizzo M."/>
            <person name="Rooney T."/>
            <person name="Rowley D."/>
            <person name="Sakano H."/>
            <person name="Salzberg S.L."/>
            <person name="Schwartz J.R."/>
            <person name="Shinn P."/>
            <person name="Southwick A.M."/>
            <person name="Sun H."/>
            <person name="Tallon L.J."/>
            <person name="Tambunga G."/>
            <person name="Toriumi M.J."/>
            <person name="Town C.D."/>
            <person name="Utterback T."/>
            <person name="Van Aken S."/>
            <person name="Vaysberg M."/>
            <person name="Vysotskaia V.S."/>
            <person name="Walker M."/>
            <person name="Wu D."/>
            <person name="Yu G."/>
            <person name="Fraser C.M."/>
            <person name="Venter J.C."/>
            <person name="Davis R.W."/>
        </authorList>
    </citation>
    <scope>NUCLEOTIDE SEQUENCE [LARGE SCALE GENOMIC DNA]</scope>
    <source>
        <strain>cv. Columbia</strain>
    </source>
</reference>
<reference key="2">
    <citation type="journal article" date="2017" name="Plant J.">
        <title>Araport11: a complete reannotation of the Arabidopsis thaliana reference genome.</title>
        <authorList>
            <person name="Cheng C.Y."/>
            <person name="Krishnakumar V."/>
            <person name="Chan A.P."/>
            <person name="Thibaud-Nissen F."/>
            <person name="Schobel S."/>
            <person name="Town C.D."/>
        </authorList>
    </citation>
    <scope>GENOME REANNOTATION</scope>
    <source>
        <strain>cv. Columbia</strain>
    </source>
</reference>
<reference key="3">
    <citation type="journal article" date="2003" name="Science">
        <title>Empirical analysis of transcriptional activity in the Arabidopsis genome.</title>
        <authorList>
            <person name="Yamada K."/>
            <person name="Lim J."/>
            <person name="Dale J.M."/>
            <person name="Chen H."/>
            <person name="Shinn P."/>
            <person name="Palm C.J."/>
            <person name="Southwick A.M."/>
            <person name="Wu H.C."/>
            <person name="Kim C.J."/>
            <person name="Nguyen M."/>
            <person name="Pham P.K."/>
            <person name="Cheuk R.F."/>
            <person name="Karlin-Newmann G."/>
            <person name="Liu S.X."/>
            <person name="Lam B."/>
            <person name="Sakano H."/>
            <person name="Wu T."/>
            <person name="Yu G."/>
            <person name="Miranda M."/>
            <person name="Quach H.L."/>
            <person name="Tripp M."/>
            <person name="Chang C.H."/>
            <person name="Lee J.M."/>
            <person name="Toriumi M.J."/>
            <person name="Chan M.M."/>
            <person name="Tang C.C."/>
            <person name="Onodera C.S."/>
            <person name="Deng J.M."/>
            <person name="Akiyama K."/>
            <person name="Ansari Y."/>
            <person name="Arakawa T."/>
            <person name="Banh J."/>
            <person name="Banno F."/>
            <person name="Bowser L."/>
            <person name="Brooks S.Y."/>
            <person name="Carninci P."/>
            <person name="Chao Q."/>
            <person name="Choy N."/>
            <person name="Enju A."/>
            <person name="Goldsmith A.D."/>
            <person name="Gurjal M."/>
            <person name="Hansen N.F."/>
            <person name="Hayashizaki Y."/>
            <person name="Johnson-Hopson C."/>
            <person name="Hsuan V.W."/>
            <person name="Iida K."/>
            <person name="Karnes M."/>
            <person name="Khan S."/>
            <person name="Koesema E."/>
            <person name="Ishida J."/>
            <person name="Jiang P.X."/>
            <person name="Jones T."/>
            <person name="Kawai J."/>
            <person name="Kamiya A."/>
            <person name="Meyers C."/>
            <person name="Nakajima M."/>
            <person name="Narusaka M."/>
            <person name="Seki M."/>
            <person name="Sakurai T."/>
            <person name="Satou M."/>
            <person name="Tamse R."/>
            <person name="Vaysberg M."/>
            <person name="Wallender E.K."/>
            <person name="Wong C."/>
            <person name="Yamamura Y."/>
            <person name="Yuan S."/>
            <person name="Shinozaki K."/>
            <person name="Davis R.W."/>
            <person name="Theologis A."/>
            <person name="Ecker J.R."/>
        </authorList>
    </citation>
    <scope>NUCLEOTIDE SEQUENCE [LARGE SCALE MRNA]</scope>
    <source>
        <strain>cv. Columbia</strain>
    </source>
</reference>
<reference key="4">
    <citation type="journal article" date="2003" name="Mol. Biol. Evol.">
        <title>The basic helix-loop-helix transcription factor family in plants: a genome-wide study of protein structure and functional diversity.</title>
        <authorList>
            <person name="Heim M.A."/>
            <person name="Jakoby M."/>
            <person name="Werber M."/>
            <person name="Martin C."/>
            <person name="Weisshaar B."/>
            <person name="Bailey P.C."/>
        </authorList>
    </citation>
    <scope>GENE FAMILY</scope>
    <scope>NOMENCLATURE</scope>
</reference>
<reference key="5">
    <citation type="journal article" date="2003" name="Plant Cell">
        <title>The Arabidopsis basic/helix-loop-helix transcription factor family.</title>
        <authorList>
            <person name="Toledo-Ortiz G."/>
            <person name="Huq E."/>
            <person name="Quail P.H."/>
        </authorList>
    </citation>
    <scope>GENE FAMILY</scope>
</reference>
<reference key="6">
    <citation type="journal article" date="2003" name="Plant Cell">
        <title>Update on the basic helix-loop-helix transcription factor gene family in Arabidopsis thaliana.</title>
        <authorList>
            <person name="Bailey P.C."/>
            <person name="Martin C."/>
            <person name="Toledo-Ortiz G."/>
            <person name="Quail P.H."/>
            <person name="Huq E."/>
            <person name="Heim M.A."/>
            <person name="Jakoby M."/>
            <person name="Werber M."/>
            <person name="Weisshaar B."/>
        </authorList>
    </citation>
    <scope>GENE FAMILY</scope>
    <scope>NOMENCLATURE</scope>
</reference>
<reference key="7">
    <citation type="journal article" date="2007" name="Development">
        <title>Regulation of the Arabidopsis root vascular initial population by LONESOME HIGHWAY.</title>
        <authorList>
            <person name="Ohashi-Ito K."/>
            <person name="Bergmann D.C."/>
        </authorList>
    </citation>
    <scope>INTERACTION WITH LHW</scope>
</reference>
<sequence>MCAKKEEEEEEEEDSSEAMNNIQNYQNDLFFHQLISHHHHHHHDPSQSETLGASGNVGSGFTIFSQDSVSPIWSLPPPTSIQPPFDQFPPPSSSPASFYGSFFNRSRAHHQGLQFGYEGFGGATSAAHHHHEQLRILSEALGPVVQAGSGPFGLQAELGKMTAQEIMDAKALAASKSHSEAERRRRERINNHLAKLRSILPNTTKTDKASLLAEVIQHVKELKRETSVISETNLVPTESDELTVAFTEEEETGDGRFVIKASLCCEDRSDLLPDMIKTLKAMRLKTLKAEITTVGGRVKNVLFVTGEESSGEEVEEEYCIGTIEEALKAVMEKSNVEESSSSGNAKRQRMSSHNTITIVEQQQQYNQR</sequence>
<organism>
    <name type="scientific">Arabidopsis thaliana</name>
    <name type="common">Mouse-ear cress</name>
    <dbReference type="NCBI Taxonomy" id="3702"/>
    <lineage>
        <taxon>Eukaryota</taxon>
        <taxon>Viridiplantae</taxon>
        <taxon>Streptophyta</taxon>
        <taxon>Embryophyta</taxon>
        <taxon>Tracheophyta</taxon>
        <taxon>Spermatophyta</taxon>
        <taxon>Magnoliopsida</taxon>
        <taxon>eudicotyledons</taxon>
        <taxon>Gunneridae</taxon>
        <taxon>Pentapetalae</taxon>
        <taxon>rosids</taxon>
        <taxon>malvids</taxon>
        <taxon>Brassicales</taxon>
        <taxon>Brassicaceae</taxon>
        <taxon>Camelineae</taxon>
        <taxon>Arabidopsis</taxon>
    </lineage>
</organism>
<comment type="subunit">
    <text evidence="4 5">Homodimer (Probable). Interacts with LHW.</text>
</comment>
<comment type="subcellular location">
    <subcellularLocation>
        <location evidence="2">Nucleus</location>
    </subcellularLocation>
</comment>
<evidence type="ECO:0000255" key="1"/>
<evidence type="ECO:0000255" key="2">
    <source>
        <dbReference type="PROSITE-ProRule" id="PRU00981"/>
    </source>
</evidence>
<evidence type="ECO:0000256" key="3">
    <source>
        <dbReference type="SAM" id="MobiDB-lite"/>
    </source>
</evidence>
<evidence type="ECO:0000269" key="4">
    <source>
    </source>
</evidence>
<evidence type="ECO:0000305" key="5"/>
<dbReference type="EMBL" id="AC011665">
    <property type="protein sequence ID" value="AAG51581.1"/>
    <property type="molecule type" value="Genomic_DNA"/>
</dbReference>
<dbReference type="EMBL" id="AC011914">
    <property type="protein sequence ID" value="AAG52041.1"/>
    <property type="molecule type" value="Genomic_DNA"/>
</dbReference>
<dbReference type="EMBL" id="CP002684">
    <property type="protein sequence ID" value="AEE34842.1"/>
    <property type="molecule type" value="Genomic_DNA"/>
</dbReference>
<dbReference type="EMBL" id="AY072161">
    <property type="protein sequence ID" value="AAL59983.1"/>
    <property type="molecule type" value="mRNA"/>
</dbReference>
<dbReference type="EMBL" id="AY122983">
    <property type="protein sequence ID" value="AAM67516.1"/>
    <property type="molecule type" value="mRNA"/>
</dbReference>
<dbReference type="PIR" id="H96712">
    <property type="entry name" value="H96712"/>
</dbReference>
<dbReference type="RefSeq" id="NP_564944.1">
    <property type="nucleotide sequence ID" value="NM_105555.4"/>
</dbReference>
<dbReference type="SMR" id="Q9S7Y1"/>
<dbReference type="BioGRID" id="28434">
    <property type="interactions" value="19"/>
</dbReference>
<dbReference type="FunCoup" id="Q9S7Y1">
    <property type="interactions" value="301"/>
</dbReference>
<dbReference type="IntAct" id="Q9S7Y1">
    <property type="interactions" value="21"/>
</dbReference>
<dbReference type="STRING" id="3702.Q9S7Y1"/>
<dbReference type="PaxDb" id="3702-AT1G68810.1"/>
<dbReference type="ProteomicsDB" id="240697"/>
<dbReference type="EnsemblPlants" id="AT1G68810.1">
    <property type="protein sequence ID" value="AT1G68810.1"/>
    <property type="gene ID" value="AT1G68810"/>
</dbReference>
<dbReference type="GeneID" id="843213"/>
<dbReference type="Gramene" id="AT1G68810.1">
    <property type="protein sequence ID" value="AT1G68810.1"/>
    <property type="gene ID" value="AT1G68810"/>
</dbReference>
<dbReference type="KEGG" id="ath:AT1G68810"/>
<dbReference type="Araport" id="AT1G68810"/>
<dbReference type="TAIR" id="AT1G68810">
    <property type="gene designation" value="ABS5"/>
</dbReference>
<dbReference type="eggNOG" id="ENOG502QRXD">
    <property type="taxonomic scope" value="Eukaryota"/>
</dbReference>
<dbReference type="HOGENOM" id="CLU_046614_0_0_1"/>
<dbReference type="InParanoid" id="Q9S7Y1"/>
<dbReference type="OMA" id="WISVIEE"/>
<dbReference type="OrthoDB" id="71302at2759"/>
<dbReference type="PhylomeDB" id="Q9S7Y1"/>
<dbReference type="PRO" id="PR:Q9S7Y1"/>
<dbReference type="Proteomes" id="UP000006548">
    <property type="component" value="Chromosome 1"/>
</dbReference>
<dbReference type="ExpressionAtlas" id="Q9S7Y1">
    <property type="expression patterns" value="baseline and differential"/>
</dbReference>
<dbReference type="GO" id="GO:0005634">
    <property type="term" value="C:nucleus"/>
    <property type="evidence" value="ECO:0007669"/>
    <property type="project" value="UniProtKB-SubCell"/>
</dbReference>
<dbReference type="GO" id="GO:0003677">
    <property type="term" value="F:DNA binding"/>
    <property type="evidence" value="ECO:0007669"/>
    <property type="project" value="UniProtKB-KW"/>
</dbReference>
<dbReference type="GO" id="GO:0003700">
    <property type="term" value="F:DNA-binding transcription factor activity"/>
    <property type="evidence" value="ECO:0000250"/>
    <property type="project" value="TAIR"/>
</dbReference>
<dbReference type="GO" id="GO:0046983">
    <property type="term" value="F:protein dimerization activity"/>
    <property type="evidence" value="ECO:0007669"/>
    <property type="project" value="InterPro"/>
</dbReference>
<dbReference type="GO" id="GO:0006355">
    <property type="term" value="P:regulation of DNA-templated transcription"/>
    <property type="evidence" value="ECO:0000304"/>
    <property type="project" value="TAIR"/>
</dbReference>
<dbReference type="CDD" id="cd11455">
    <property type="entry name" value="bHLH_AtAIG1_like"/>
    <property type="match status" value="1"/>
</dbReference>
<dbReference type="FunFam" id="4.10.280.10:FF:000070">
    <property type="entry name" value="transcription factor bHLH30"/>
    <property type="match status" value="1"/>
</dbReference>
<dbReference type="Gene3D" id="4.10.280.10">
    <property type="entry name" value="Helix-loop-helix DNA-binding domain"/>
    <property type="match status" value="1"/>
</dbReference>
<dbReference type="InterPro" id="IPR045847">
    <property type="entry name" value="AIG1-like"/>
</dbReference>
<dbReference type="InterPro" id="IPR011598">
    <property type="entry name" value="bHLH_dom"/>
</dbReference>
<dbReference type="InterPro" id="IPR036638">
    <property type="entry name" value="HLH_DNA-bd_sf"/>
</dbReference>
<dbReference type="PANTHER" id="PTHR45844">
    <property type="entry name" value="TRANSCRIPTION FACTOR BHLH30"/>
    <property type="match status" value="1"/>
</dbReference>
<dbReference type="PANTHER" id="PTHR45844:SF2">
    <property type="entry name" value="TRANSCRIPTION FACTOR BHLH30"/>
    <property type="match status" value="1"/>
</dbReference>
<dbReference type="Pfam" id="PF00010">
    <property type="entry name" value="HLH"/>
    <property type="match status" value="1"/>
</dbReference>
<dbReference type="SMART" id="SM00353">
    <property type="entry name" value="HLH"/>
    <property type="match status" value="1"/>
</dbReference>
<dbReference type="SUPFAM" id="SSF47459">
    <property type="entry name" value="HLH, helix-loop-helix DNA-binding domain"/>
    <property type="match status" value="1"/>
</dbReference>
<dbReference type="PROSITE" id="PS50888">
    <property type="entry name" value="BHLH"/>
    <property type="match status" value="1"/>
</dbReference>
<accession>Q9S7Y1</accession>
<proteinExistence type="evidence at protein level"/>